<proteinExistence type="inferred from homology"/>
<feature type="chain" id="PRO_0000130309" description="Small ribosomal subunit protein uS3c">
    <location>
        <begin position="1"/>
        <end position="239"/>
    </location>
</feature>
<feature type="domain" description="KH type-2">
    <location>
        <begin position="43"/>
        <end position="139"/>
    </location>
</feature>
<feature type="region of interest" description="Disordered" evidence="2">
    <location>
        <begin position="50"/>
        <end position="74"/>
    </location>
</feature>
<dbReference type="EMBL" id="AB042240">
    <property type="protein sequence ID" value="BAB47072.1"/>
    <property type="molecule type" value="Genomic_DNA"/>
</dbReference>
<dbReference type="RefSeq" id="NP_114296.1">
    <property type="nucleotide sequence ID" value="NC_002762.1"/>
</dbReference>
<dbReference type="SMR" id="Q95H49"/>
<dbReference type="STRING" id="4565.Q95H49"/>
<dbReference type="PaxDb" id="4565-Traes_1AL_6CD571A59.1"/>
<dbReference type="EnsemblPlants" id="TraesARI6A03G03236360.1">
    <property type="protein sequence ID" value="TraesARI6A03G03236360.1.CDS1"/>
    <property type="gene ID" value="TraesARI6A03G03236360"/>
</dbReference>
<dbReference type="EnsemblPlants" id="TraesARI7B03G04256800.1">
    <property type="protein sequence ID" value="TraesARI7B03G04256800.1.CDS1"/>
    <property type="gene ID" value="TraesARI7B03G04256800"/>
</dbReference>
<dbReference type="EnsemblPlants" id="TraesJUL1D03G00458330.1">
    <property type="protein sequence ID" value="TraesJUL1D03G00458330.1.CDS1"/>
    <property type="gene ID" value="TraesJUL1D03G00458330"/>
</dbReference>
<dbReference type="EnsemblPlants" id="TraesJUL2D03G01180950.1">
    <property type="protein sequence ID" value="TraesJUL2D03G01180950.1.CDS1"/>
    <property type="gene ID" value="TraesJUL2D03G01180950"/>
</dbReference>
<dbReference type="EnsemblPlants" id="TraesKAR1D01G0107120.1">
    <property type="protein sequence ID" value="cds.TraesKAR1D01G0107120.1"/>
    <property type="gene ID" value="TraesKAR1D01G0107120"/>
</dbReference>
<dbReference type="EnsemblPlants" id="TraesKARUn01G0026870.1">
    <property type="protein sequence ID" value="cds.TraesKARUn01G0026870.1"/>
    <property type="gene ID" value="TraesKARUn01G0026870"/>
</dbReference>
<dbReference type="EnsemblPlants" id="TraesKARUn01G0027290.1">
    <property type="protein sequence ID" value="cds.TraesKARUn01G0027290.1"/>
    <property type="gene ID" value="TraesKARUn01G0027290"/>
</dbReference>
<dbReference type="EnsemblPlants" id="TraesKARUn01G0028350.1">
    <property type="protein sequence ID" value="cds.TraesKARUn01G0028350.1"/>
    <property type="gene ID" value="TraesKARUn01G0028350"/>
</dbReference>
<dbReference type="EnsemblPlants" id="TraesKARUn01G0029740.1">
    <property type="protein sequence ID" value="cds.TraesKARUn01G0029740.1"/>
    <property type="gene ID" value="TraesKARUn01G0029740"/>
</dbReference>
<dbReference type="EnsemblPlants" id="TraesKARUn01G0031050.1">
    <property type="protein sequence ID" value="cds.TraesKARUn01G0031050.1"/>
    <property type="gene ID" value="TraesKARUn01G0031050"/>
</dbReference>
<dbReference type="EnsemblPlants" id="TraesKARUn01G0032590.1">
    <property type="protein sequence ID" value="cds.TraesKARUn01G0032590.1"/>
    <property type="gene ID" value="TraesKARUn01G0032590"/>
</dbReference>
<dbReference type="EnsemblPlants" id="TraesKARUn01G0032900.1">
    <property type="protein sequence ID" value="cds.TraesKARUn01G0032900.1"/>
    <property type="gene ID" value="TraesKARUn01G0032900"/>
</dbReference>
<dbReference type="EnsemblPlants" id="TraesKARUn01G0032960.1">
    <property type="protein sequence ID" value="cds.TraesKARUn01G0032960.1"/>
    <property type="gene ID" value="TraesKARUn01G0032960"/>
</dbReference>
<dbReference type="EnsemblPlants" id="TraesKARUn01G0034760.1">
    <property type="protein sequence ID" value="cds.TraesKARUn01G0034760.1"/>
    <property type="gene ID" value="TraesKARUn01G0034760"/>
</dbReference>
<dbReference type="EnsemblPlants" id="TraesKARUn01G0037110.1">
    <property type="protein sequence ID" value="cds.TraesKARUn01G0037110.1"/>
    <property type="gene ID" value="TraesKARUn01G0037110"/>
</dbReference>
<dbReference type="EnsemblPlants" id="TraesKARUn01G0037470.1">
    <property type="protein sequence ID" value="cds.TraesKARUn01G0037470.1"/>
    <property type="gene ID" value="TraesKARUn01G0037470"/>
</dbReference>
<dbReference type="EnsemblPlants" id="TraesKARUn01G0060540.1">
    <property type="protein sequence ID" value="cds.TraesKARUn01G0060540.1"/>
    <property type="gene ID" value="TraesKARUn01G0060540"/>
</dbReference>
<dbReference type="EnsemblPlants" id="TraesKARUn01G0060960.1">
    <property type="protein sequence ID" value="cds.TraesKARUn01G0060960.1"/>
    <property type="gene ID" value="TraesKARUn01G0060960"/>
</dbReference>
<dbReference type="EnsemblPlants" id="TraesKARUn01G0061340.1">
    <property type="protein sequence ID" value="cds.TraesKARUn01G0061340.1"/>
    <property type="gene ID" value="TraesKARUn01G0061340"/>
</dbReference>
<dbReference type="EnsemblPlants" id="TraesKARUn01G0061400.1">
    <property type="protein sequence ID" value="cds.TraesKARUn01G0061400.1"/>
    <property type="gene ID" value="TraesKARUn01G0061400"/>
</dbReference>
<dbReference type="EnsemblPlants" id="TraesKARUn01G0066120.1">
    <property type="protein sequence ID" value="cds.TraesKARUn01G0066120.1"/>
    <property type="gene ID" value="TraesKARUn01G0066120"/>
</dbReference>
<dbReference type="EnsemblPlants" id="TraesKARUn01G0066480.1">
    <property type="protein sequence ID" value="cds.TraesKARUn01G0066480.1"/>
    <property type="gene ID" value="TraesKARUn01G0066480"/>
</dbReference>
<dbReference type="EnsemblPlants" id="TraesKARUn01G0067170.1">
    <property type="protein sequence ID" value="cds.TraesKARUn01G0067170.1"/>
    <property type="gene ID" value="TraesKARUn01G0067170"/>
</dbReference>
<dbReference type="EnsemblPlants" id="TraesKARUn01G0068670.1">
    <property type="protein sequence ID" value="cds.TraesKARUn01G0068670.1"/>
    <property type="gene ID" value="TraesKARUn01G0068670"/>
</dbReference>
<dbReference type="EnsemblPlants" id="TraesKARUn01G0070030.1">
    <property type="protein sequence ID" value="cds.TraesKARUn01G0070030.1"/>
    <property type="gene ID" value="TraesKARUn01G0070030"/>
</dbReference>
<dbReference type="EnsemblPlants" id="TraesKARUn01G0073710.1">
    <property type="protein sequence ID" value="cds.TraesKARUn01G0073710.1"/>
    <property type="gene ID" value="TraesKARUn01G0073710"/>
</dbReference>
<dbReference type="EnsemblPlants" id="TraesKARUn01G0077580.1">
    <property type="protein sequence ID" value="cds.TraesKARUn01G0077580.1"/>
    <property type="gene ID" value="TraesKARUn01G0077580"/>
</dbReference>
<dbReference type="EnsemblPlants" id="TraesKARUn01G0079190.1">
    <property type="protein sequence ID" value="cds.TraesKARUn01G0079190.1"/>
    <property type="gene ID" value="TraesKARUn01G0079190"/>
</dbReference>
<dbReference type="EnsemblPlants" id="TraesKARUn01G0083290.1">
    <property type="protein sequence ID" value="cds.TraesKARUn01G0083290.1"/>
    <property type="gene ID" value="TraesKARUn01G0083290"/>
</dbReference>
<dbReference type="EnsemblPlants" id="TraesKARUn01G0085500.1">
    <property type="protein sequence ID" value="cds.TraesKARUn01G0085500.1"/>
    <property type="gene ID" value="TraesKARUn01G0085500"/>
</dbReference>
<dbReference type="EnsemblPlants" id="TraesKARUn01G0085560.1">
    <property type="protein sequence ID" value="cds.TraesKARUn01G0085560.1"/>
    <property type="gene ID" value="TraesKARUn01G0085560"/>
</dbReference>
<dbReference type="EnsemblPlants" id="TraesKARUn01G0087960.1">
    <property type="protein sequence ID" value="cds.TraesKARUn01G0087960.1"/>
    <property type="gene ID" value="TraesKARUn01G0087960"/>
</dbReference>
<dbReference type="EnsemblPlants" id="TraesKARUn01G0088310.1">
    <property type="protein sequence ID" value="cds.TraesKARUn01G0088310.1"/>
    <property type="gene ID" value="TraesKARUn01G0088310"/>
</dbReference>
<dbReference type="EnsemblPlants" id="TraesKARUn01G0089560.1">
    <property type="protein sequence ID" value="cds.TraesKARUn01G0089560.1"/>
    <property type="gene ID" value="TraesKARUn01G0089560"/>
</dbReference>
<dbReference type="EnsemblPlants" id="TraesKARUn01G0090040.1">
    <property type="protein sequence ID" value="cds.TraesKARUn01G0090040.1"/>
    <property type="gene ID" value="TraesKARUn01G0090040"/>
</dbReference>
<dbReference type="EnsemblPlants" id="TraesKARUn01G0090260.1">
    <property type="protein sequence ID" value="cds.TraesKARUn01G0090260.1"/>
    <property type="gene ID" value="TraesKARUn01G0090260"/>
</dbReference>
<dbReference type="EnsemblPlants" id="TraesKARUn01G0091880.1">
    <property type="protein sequence ID" value="cds.TraesKARUn01G0091880.1"/>
    <property type="gene ID" value="TraesKARUn01G0091880"/>
</dbReference>
<dbReference type="EnsemblPlants" id="TraesKARUn01G0092210.1">
    <property type="protein sequence ID" value="cds.TraesKARUn01G0092210.1"/>
    <property type="gene ID" value="TraesKARUn01G0092210"/>
</dbReference>
<dbReference type="EnsemblPlants" id="TraesKARUn01G0094140.1">
    <property type="protein sequence ID" value="cds.TraesKARUn01G0094140.1"/>
    <property type="gene ID" value="TraesKARUn01G0094140"/>
</dbReference>
<dbReference type="EnsemblPlants" id="TraesKARUn01G0097060.1">
    <property type="protein sequence ID" value="cds.TraesKARUn01G0097060.1"/>
    <property type="gene ID" value="TraesKARUn01G0097060"/>
</dbReference>
<dbReference type="EnsemblPlants" id="TraesKARUn01G0097450.1">
    <property type="protein sequence ID" value="cds.TraesKARUn01G0097450.1"/>
    <property type="gene ID" value="TraesKARUn01G0097450"/>
</dbReference>
<dbReference type="EnsemblPlants" id="TraesKARUn01G0099730.1">
    <property type="protein sequence ID" value="cds.TraesKARUn01G0099730.1"/>
    <property type="gene ID" value="TraesKARUn01G0099730"/>
</dbReference>
<dbReference type="EnsemblPlants" id="TraesKARUn01G0101850.1">
    <property type="protein sequence ID" value="cds.TraesKARUn01G0101850.1"/>
    <property type="gene ID" value="TraesKARUn01G0101850"/>
</dbReference>
<dbReference type="EnsemblPlants" id="TraesKARUn01G0105060.1">
    <property type="protein sequence ID" value="cds.TraesKARUn01G0105060.1"/>
    <property type="gene ID" value="TraesKARUn01G0105060"/>
</dbReference>
<dbReference type="EnsemblPlants" id="TraesKARUn01G0108130.1">
    <property type="protein sequence ID" value="cds.TraesKARUn01G0108130.1"/>
    <property type="gene ID" value="TraesKARUn01G0108130"/>
</dbReference>
<dbReference type="EnsemblPlants" id="TraesKARUn01G0108400.1">
    <property type="protein sequence ID" value="cds.TraesKARUn01G0108400.1"/>
    <property type="gene ID" value="TraesKARUn01G0108400"/>
</dbReference>
<dbReference type="EnsemblPlants" id="TraesKARUn01G0108700.1">
    <property type="protein sequence ID" value="cds.TraesKARUn01G0108700.1"/>
    <property type="gene ID" value="TraesKARUn01G0108700"/>
</dbReference>
<dbReference type="EnsemblPlants" id="TraesKARUn01G0111170.1">
    <property type="protein sequence ID" value="cds.TraesKARUn01G0111170.1"/>
    <property type="gene ID" value="TraesKARUn01G0111170"/>
</dbReference>
<dbReference type="EnsemblPlants" id="TraesKARUn01G0111790.1">
    <property type="protein sequence ID" value="cds.TraesKARUn01G0111790.1"/>
    <property type="gene ID" value="TraesKARUn01G0111790"/>
</dbReference>
<dbReference type="EnsemblPlants" id="TraesKARUn01G0112430.1">
    <property type="protein sequence ID" value="cds.TraesKARUn01G0112430.1"/>
    <property type="gene ID" value="TraesKARUn01G0112430"/>
</dbReference>
<dbReference type="EnsemblPlants" id="TraesKARUn01G0113020.1">
    <property type="protein sequence ID" value="cds.TraesKARUn01G0113020.1"/>
    <property type="gene ID" value="TraesKARUn01G0113020"/>
</dbReference>
<dbReference type="EnsemblPlants" id="TraesKARUn01G0113050.1">
    <property type="protein sequence ID" value="cds.TraesKARUn01G0113050.1"/>
    <property type="gene ID" value="TraesKARUn01G0113050"/>
</dbReference>
<dbReference type="EnsemblPlants" id="TraesKARUn01G0114300.1">
    <property type="protein sequence ID" value="cds.TraesKARUn01G0114300.1"/>
    <property type="gene ID" value="TraesKARUn01G0114300"/>
</dbReference>
<dbReference type="EnsemblPlants" id="TraesKARUn01G0114900.1">
    <property type="protein sequence ID" value="cds.TraesKARUn01G0114900.1"/>
    <property type="gene ID" value="TraesKARUn01G0114900"/>
</dbReference>
<dbReference type="EnsemblPlants" id="TraesKARUn01G0116460.1">
    <property type="protein sequence ID" value="cds.TraesKARUn01G0116460.1"/>
    <property type="gene ID" value="TraesKARUn01G0116460"/>
</dbReference>
<dbReference type="EnsemblPlants" id="TraesKARUn01G0118690.1">
    <property type="protein sequence ID" value="cds.TraesKARUn01G0118690.1"/>
    <property type="gene ID" value="TraesKARUn01G0118690"/>
</dbReference>
<dbReference type="EnsemblPlants" id="TraesKARUn01G0123970.1">
    <property type="protein sequence ID" value="cds.TraesKARUn01G0123970.1"/>
    <property type="gene ID" value="TraesKARUn01G0123970"/>
</dbReference>
<dbReference type="EnsemblPlants" id="TraesKARUn01G0124300.1">
    <property type="protein sequence ID" value="cds.TraesKARUn01G0124300.1"/>
    <property type="gene ID" value="TraesKARUn01G0124300"/>
</dbReference>
<dbReference type="EnsemblPlants" id="TraesKARUn01G0125580.1">
    <property type="protein sequence ID" value="cds.TraesKARUn01G0125580.1"/>
    <property type="gene ID" value="TraesKARUn01G0125580"/>
</dbReference>
<dbReference type="EnsemblPlants" id="TraesKARUn01G0129220.1">
    <property type="protein sequence ID" value="cds.TraesKARUn01G0129220.1"/>
    <property type="gene ID" value="TraesKARUn01G0129220"/>
</dbReference>
<dbReference type="EnsemblPlants" id="TraesKARUn01G0130400.1">
    <property type="protein sequence ID" value="cds.TraesKARUn01G0130400.1"/>
    <property type="gene ID" value="TraesKARUn01G0130400"/>
</dbReference>
<dbReference type="EnsemblPlants" id="TraesKARUn01G0132450.1">
    <property type="protein sequence ID" value="cds.TraesKARUn01G0132450.1"/>
    <property type="gene ID" value="TraesKARUn01G0132450"/>
</dbReference>
<dbReference type="EnsemblPlants" id="TraesKARUn01G0132720.1">
    <property type="protein sequence ID" value="cds.TraesKARUn01G0132720.1"/>
    <property type="gene ID" value="TraesKARUn01G0132720"/>
</dbReference>
<dbReference type="EnsemblPlants" id="TraesKARUn01G0132890.1">
    <property type="protein sequence ID" value="cds.TraesKARUn01G0132890.1"/>
    <property type="gene ID" value="TraesKARUn01G0132890"/>
</dbReference>
<dbReference type="EnsemblPlants" id="TraesKARUn01G0137660.1">
    <property type="protein sequence ID" value="cds.TraesKARUn01G0137660.1"/>
    <property type="gene ID" value="TraesKARUn01G0137660"/>
</dbReference>
<dbReference type="EnsemblPlants" id="TraesKARUn01G0137950.1">
    <property type="protein sequence ID" value="cds.TraesKARUn01G0137950.1"/>
    <property type="gene ID" value="TraesKARUn01G0137950"/>
</dbReference>
<dbReference type="EnsemblPlants" id="TraesKARUn01G0141080.1">
    <property type="protein sequence ID" value="cds.TraesKARUn01G0141080.1"/>
    <property type="gene ID" value="TraesKARUn01G0141080"/>
</dbReference>
<dbReference type="EnsemblPlants" id="TraesKARUn01G0142360.1">
    <property type="protein sequence ID" value="cds.TraesKARUn01G0142360.1"/>
    <property type="gene ID" value="TraesKARUn01G0142360"/>
</dbReference>
<dbReference type="EnsemblPlants" id="TraesKARUn01G0143700.1">
    <property type="protein sequence ID" value="cds.TraesKARUn01G0143700.1"/>
    <property type="gene ID" value="TraesKARUn01G0143700"/>
</dbReference>
<dbReference type="EnsemblPlants" id="TraesKARUn01G0145620.1">
    <property type="protein sequence ID" value="cds.TraesKARUn01G0145620.1"/>
    <property type="gene ID" value="TraesKARUn01G0145620"/>
</dbReference>
<dbReference type="EnsemblPlants" id="TraesKARUn01G0146520.1">
    <property type="protein sequence ID" value="cds.TraesKARUn01G0146520.1"/>
    <property type="gene ID" value="TraesKARUn01G0146520"/>
</dbReference>
<dbReference type="EnsemblPlants" id="TraesKARUn01G0147680.1">
    <property type="protein sequence ID" value="cds.TraesKARUn01G0147680.1"/>
    <property type="gene ID" value="TraesKARUn01G0147680"/>
</dbReference>
<dbReference type="EnsemblPlants" id="TraesKARUn01G0147800.1">
    <property type="protein sequence ID" value="cds.TraesKARUn01G0147800.1"/>
    <property type="gene ID" value="TraesKARUn01G0147800"/>
</dbReference>
<dbReference type="EnsemblPlants" id="TraesKARUn01G0150050.1">
    <property type="protein sequence ID" value="cds.TraesKARUn01G0150050.1"/>
    <property type="gene ID" value="TraesKARUn01G0150050"/>
</dbReference>
<dbReference type="EnsemblPlants" id="TraesKARUn01G0152130.1">
    <property type="protein sequence ID" value="cds.TraesKARUn01G0152130.1"/>
    <property type="gene ID" value="TraesKARUn01G0152130"/>
</dbReference>
<dbReference type="EnsemblPlants" id="TraesKARUn01G0152620.1">
    <property type="protein sequence ID" value="cds.TraesKARUn01G0152620.1"/>
    <property type="gene ID" value="TraesKARUn01G0152620"/>
</dbReference>
<dbReference type="EnsemblPlants" id="TraesKARUn01G0154520.1">
    <property type="protein sequence ID" value="cds.TraesKARUn01G0154520.1"/>
    <property type="gene ID" value="TraesKARUn01G0154520"/>
</dbReference>
<dbReference type="EnsemblPlants" id="TraesKARUn01G0156460.1">
    <property type="protein sequence ID" value="cds.TraesKARUn01G0156460.1"/>
    <property type="gene ID" value="TraesKARUn01G0156460"/>
</dbReference>
<dbReference type="EnsemblPlants" id="TraesKARUn01G0157720.1">
    <property type="protein sequence ID" value="cds.TraesKARUn01G0157720.1"/>
    <property type="gene ID" value="TraesKARUn01G0157720"/>
</dbReference>
<dbReference type="EnsemblPlants" id="TraesKARUn01G0159350.1">
    <property type="protein sequence ID" value="cds.TraesKARUn01G0159350.1"/>
    <property type="gene ID" value="TraesKARUn01G0159350"/>
</dbReference>
<dbReference type="EnsemblPlants" id="TraesKARUn01G0159710.1">
    <property type="protein sequence ID" value="cds.TraesKARUn01G0159710.1"/>
    <property type="gene ID" value="TraesKARUn01G0159710"/>
</dbReference>
<dbReference type="EnsemblPlants" id="TraesKARUn01G0159820.1">
    <property type="protein sequence ID" value="cds.TraesKARUn01G0159820.1"/>
    <property type="gene ID" value="TraesKARUn01G0159820"/>
</dbReference>
<dbReference type="EnsemblPlants" id="TraesKARUn01G0161550.1">
    <property type="protein sequence ID" value="cds.TraesKARUn01G0161550.1"/>
    <property type="gene ID" value="TraesKARUn01G0161550"/>
</dbReference>
<dbReference type="EnsemblPlants" id="TraesKARUn01G0163410.1">
    <property type="protein sequence ID" value="cds.TraesKARUn01G0163410.1"/>
    <property type="gene ID" value="TraesKARUn01G0163410"/>
</dbReference>
<dbReference type="EnsemblPlants" id="TraesKARUn01G0164700.1">
    <property type="protein sequence ID" value="cds.TraesKARUn01G0164700.1"/>
    <property type="gene ID" value="TraesKARUn01G0164700"/>
</dbReference>
<dbReference type="EnsemblPlants" id="TraesKARUn01G0166000.1">
    <property type="protein sequence ID" value="cds.TraesKARUn01G0166000.1"/>
    <property type="gene ID" value="TraesKARUn01G0166000"/>
</dbReference>
<dbReference type="EnsemblPlants" id="TraesKARUn01G0167420.1">
    <property type="protein sequence ID" value="cds.TraesKARUn01G0167420.1"/>
    <property type="gene ID" value="TraesKARUn01G0167420"/>
</dbReference>
<dbReference type="EnsemblPlants" id="TraesKARUn01G0167620.1">
    <property type="protein sequence ID" value="cds.TraesKARUn01G0167620.1"/>
    <property type="gene ID" value="TraesKARUn01G0167620"/>
</dbReference>
<dbReference type="EnsemblPlants" id="TraesKARUn01G0168010.1">
    <property type="protein sequence ID" value="cds.TraesKARUn01G0168010.1"/>
    <property type="gene ID" value="TraesKARUn01G0168010"/>
</dbReference>
<dbReference type="EnsemblPlants" id="TraesKARUn01G0170820.1">
    <property type="protein sequence ID" value="cds.TraesKARUn01G0170820.1"/>
    <property type="gene ID" value="TraesKARUn01G0170820"/>
</dbReference>
<dbReference type="EnsemblPlants" id="TraesKARUn01G0171070.1">
    <property type="protein sequence ID" value="cds.TraesKARUn01G0171070.1"/>
    <property type="gene ID" value="TraesKARUn01G0171070"/>
</dbReference>
<dbReference type="EnsemblPlants" id="TraesKARUn01G0171440.1">
    <property type="protein sequence ID" value="cds.TraesKARUn01G0171440.1"/>
    <property type="gene ID" value="TraesKARUn01G0171440"/>
</dbReference>
<dbReference type="EnsemblPlants" id="TraesKARUn01G0171670.1">
    <property type="protein sequence ID" value="cds.TraesKARUn01G0171670.1"/>
    <property type="gene ID" value="TraesKARUn01G0171670"/>
</dbReference>
<dbReference type="EnsemblPlants" id="TraesKARUn01G0177040.1">
    <property type="protein sequence ID" value="cds.TraesKARUn01G0177040.1"/>
    <property type="gene ID" value="TraesKARUn01G0177040"/>
</dbReference>
<dbReference type="EnsemblPlants" id="TraesKARUn01G0177140.1">
    <property type="protein sequence ID" value="cds.TraesKARUn01G0177140.1"/>
    <property type="gene ID" value="TraesKARUn01G0177140"/>
</dbReference>
<dbReference type="EnsemblPlants" id="TraesKARUn01G0178360.1">
    <property type="protein sequence ID" value="cds.TraesKARUn01G0178360.1"/>
    <property type="gene ID" value="TraesKARUn01G0178360"/>
</dbReference>
<dbReference type="EnsemblPlants" id="TraesKARUn01G0178900.1">
    <property type="protein sequence ID" value="cds.TraesKARUn01G0178900.1"/>
    <property type="gene ID" value="TraesKARUn01G0178900"/>
</dbReference>
<dbReference type="EnsemblPlants" id="TraesKARUn01G0178970.1">
    <property type="protein sequence ID" value="cds.TraesKARUn01G0178970.1"/>
    <property type="gene ID" value="TraesKARUn01G0178970"/>
</dbReference>
<dbReference type="EnsemblPlants" id="TraesKARUn01G0179580.1">
    <property type="protein sequence ID" value="cds.TraesKARUn01G0179580.1"/>
    <property type="gene ID" value="TraesKARUn01G0179580"/>
</dbReference>
<dbReference type="EnsemblPlants" id="TraesKARUn01G0182500.1">
    <property type="protein sequence ID" value="cds.TraesKARUn01G0182500.1"/>
    <property type="gene ID" value="TraesKARUn01G0182500"/>
</dbReference>
<dbReference type="EnsemblPlants" id="TraesKARUn01G0182690.1">
    <property type="protein sequence ID" value="cds.TraesKARUn01G0182690.1"/>
    <property type="gene ID" value="TraesKARUn01G0182690"/>
</dbReference>
<dbReference type="EnsemblPlants" id="TraesKARUn01G0184190.1">
    <property type="protein sequence ID" value="cds.TraesKARUn01G0184190.1"/>
    <property type="gene ID" value="TraesKARUn01G0184190"/>
</dbReference>
<dbReference type="EnsemblPlants" id="TraesKARUn01G0184450.1">
    <property type="protein sequence ID" value="cds.TraesKARUn01G0184450.1"/>
    <property type="gene ID" value="TraesKARUn01G0184450"/>
</dbReference>
<dbReference type="EnsemblPlants" id="TraesKARUn01G0184610.1">
    <property type="protein sequence ID" value="cds.TraesKARUn01G0184610.1"/>
    <property type="gene ID" value="TraesKARUn01G0184610"/>
</dbReference>
<dbReference type="EnsemblPlants" id="TraesKARUn01G0184850.1">
    <property type="protein sequence ID" value="cds.TraesKARUn01G0184850.1"/>
    <property type="gene ID" value="TraesKARUn01G0184850"/>
</dbReference>
<dbReference type="EnsemblPlants" id="TraesKARUn01G0184920.1">
    <property type="protein sequence ID" value="cds.TraesKARUn01G0184920.1"/>
    <property type="gene ID" value="TraesKARUn01G0184920"/>
</dbReference>
<dbReference type="EnsemblPlants" id="TraesKARUn01G0185260.1">
    <property type="protein sequence ID" value="cds.TraesKARUn01G0185260.1"/>
    <property type="gene ID" value="TraesKARUn01G0185260"/>
</dbReference>
<dbReference type="EnsemblPlants" id="TraesKARUn01G0185370.1">
    <property type="protein sequence ID" value="cds.TraesKARUn01G0185370.1"/>
    <property type="gene ID" value="TraesKARUn01G0185370"/>
</dbReference>
<dbReference type="EnsemblPlants" id="TraesKARUn01G0187420.1">
    <property type="protein sequence ID" value="cds.TraesKARUn01G0187420.1"/>
    <property type="gene ID" value="TraesKARUn01G0187420"/>
</dbReference>
<dbReference type="EnsemblPlants" id="TraesKARUn01G0187640.1">
    <property type="protein sequence ID" value="cds.TraesKARUn01G0187640.1"/>
    <property type="gene ID" value="TraesKARUn01G0187640"/>
</dbReference>
<dbReference type="EnsemblPlants" id="TraesKARUn01G0187900.1">
    <property type="protein sequence ID" value="cds.TraesKARUn01G0187900.1"/>
    <property type="gene ID" value="TraesKARUn01G0187900"/>
</dbReference>
<dbReference type="EnsemblPlants" id="TraesKARUn01G0188590.1">
    <property type="protein sequence ID" value="cds.TraesKARUn01G0188590.1"/>
    <property type="gene ID" value="TraesKARUn01G0188590"/>
</dbReference>
<dbReference type="EnsemblPlants" id="TraesKARUn01G0189060.1">
    <property type="protein sequence ID" value="cds.TraesKARUn01G0189060.1"/>
    <property type="gene ID" value="TraesKARUn01G0189060"/>
</dbReference>
<dbReference type="EnsemblPlants" id="TraesKARUn01G0189420.1">
    <property type="protein sequence ID" value="cds.TraesKARUn01G0189420.1"/>
    <property type="gene ID" value="TraesKARUn01G0189420"/>
</dbReference>
<dbReference type="EnsemblPlants" id="TraesKARUn01G0189510.1">
    <property type="protein sequence ID" value="cds.TraesKARUn01G0189510.1"/>
    <property type="gene ID" value="TraesKARUn01G0189510"/>
</dbReference>
<dbReference type="EnsemblPlants" id="TraesKARUn01G0191820.1">
    <property type="protein sequence ID" value="cds.TraesKARUn01G0191820.1"/>
    <property type="gene ID" value="TraesKARUn01G0191820"/>
</dbReference>
<dbReference type="EnsemblPlants" id="TraesLAC1D03G00458790.1">
    <property type="protein sequence ID" value="TraesLAC1D03G00458790.1.CDS1"/>
    <property type="gene ID" value="TraesLAC1D03G00458790"/>
</dbReference>
<dbReference type="EnsemblPlants" id="TraesLDM1D03G00457260.1">
    <property type="protein sequence ID" value="TraesLDM1D03G00457260.1.CDS1"/>
    <property type="gene ID" value="TraesLDM1D03G00457260"/>
</dbReference>
<dbReference type="EnsemblPlants" id="TraesLDM7D03G04499880.1">
    <property type="protein sequence ID" value="TraesLDM7D03G04499880.1.CDS1"/>
    <property type="gene ID" value="TraesLDM7D03G04499880"/>
</dbReference>
<dbReference type="EnsemblPlants" id="TraesMAC1D03G00454840.1">
    <property type="protein sequence ID" value="TraesMAC1D03G00454840.1.CDS1"/>
    <property type="gene ID" value="TraesMAC1D03G00454840"/>
</dbReference>
<dbReference type="EnsemblPlants" id="TraesPARA_EIv1.0_2055410.1">
    <property type="protein sequence ID" value="TraesPARA_EIv1.0_2055410.1.CDS1"/>
    <property type="gene ID" value="TraesPARA_EIv1.0_2055410"/>
</dbReference>
<dbReference type="EnsemblPlants" id="TraesPARA_EIv1.0_2645090.1">
    <property type="protein sequence ID" value="TraesPARA_EIv1.0_2645090.1.CDS1"/>
    <property type="gene ID" value="TraesPARA_EIv1.0_2645090"/>
</dbReference>
<dbReference type="EnsemblPlants" id="TraesPARA_EIv1.0_2645810.1">
    <property type="protein sequence ID" value="TraesPARA_EIv1.0_2645810.1.CDS1"/>
    <property type="gene ID" value="TraesPARA_EIv1.0_2645810"/>
</dbReference>
<dbReference type="EnsemblPlants" id="TraesPARA_EIv1.0_2646760.1">
    <property type="protein sequence ID" value="TraesPARA_EIv1.0_2646760.1.CDS1"/>
    <property type="gene ID" value="TraesPARA_EIv1.0_2646760"/>
</dbReference>
<dbReference type="EnsemblPlants" id="TraesPARA_EIv1.0_2646820.1">
    <property type="protein sequence ID" value="TraesPARA_EIv1.0_2646820.1.CDS1"/>
    <property type="gene ID" value="TraesPARA_EIv1.0_2646820"/>
</dbReference>
<dbReference type="EnsemblPlants" id="TraesPARA_EIv1.0_2647290.1">
    <property type="protein sequence ID" value="TraesPARA_EIv1.0_2647290.1.CDS1"/>
    <property type="gene ID" value="TraesPARA_EIv1.0_2647290"/>
</dbReference>
<dbReference type="EnsemblPlants" id="TraesPARA_EIv1.0_2647560.1">
    <property type="protein sequence ID" value="TraesPARA_EIv1.0_2647560.1.CDS1"/>
    <property type="gene ID" value="TraesPARA_EIv1.0_2647560"/>
</dbReference>
<dbReference type="EnsemblPlants" id="TraesPARA_EIv1.0_2652790.1">
    <property type="protein sequence ID" value="TraesPARA_EIv1.0_2652790.1.CDS1"/>
    <property type="gene ID" value="TraesPARA_EIv1.0_2652790"/>
</dbReference>
<dbReference type="EnsemblPlants" id="TraesPARA_EIv1.0_2654460.1">
    <property type="protein sequence ID" value="TraesPARA_EIv1.0_2654460.1.CDS1"/>
    <property type="gene ID" value="TraesPARA_EIv1.0_2654460"/>
</dbReference>
<dbReference type="EnsemblPlants" id="TraesPARA_EIv1.0_2656950.1">
    <property type="protein sequence ID" value="TraesPARA_EIv1.0_2656950.1.CDS1"/>
    <property type="gene ID" value="TraesPARA_EIv1.0_2656950"/>
</dbReference>
<dbReference type="EnsemblPlants" id="TraesPARA_EIv1.0_2660160.1">
    <property type="protein sequence ID" value="TraesPARA_EIv1.0_2660160.1.CDS1"/>
    <property type="gene ID" value="TraesPARA_EIv1.0_2660160"/>
</dbReference>
<dbReference type="EnsemblPlants" id="TraesPARA_EIv1.0_2660430.1">
    <property type="protein sequence ID" value="TraesPARA_EIv1.0_2660430.1.CDS1"/>
    <property type="gene ID" value="TraesPARA_EIv1.0_2660430"/>
</dbReference>
<dbReference type="EnsemblPlants" id="TraesPARA_EIv1.0_2665400.1">
    <property type="protein sequence ID" value="TraesPARA_EIv1.0_2665400.1.CDS1"/>
    <property type="gene ID" value="TraesPARA_EIv1.0_2665400"/>
</dbReference>
<dbReference type="EnsemblPlants" id="TraesPARA_EIv1.0_2666170.1">
    <property type="protein sequence ID" value="TraesPARA_EIv1.0_2666170.1.CDS1"/>
    <property type="gene ID" value="TraesPARA_EIv1.0_2666170"/>
</dbReference>
<dbReference type="EnsemblPlants" id="TraesPARA_EIv1.0_2666300.1">
    <property type="protein sequence ID" value="TraesPARA_EIv1.0_2666300.1.CDS1"/>
    <property type="gene ID" value="TraesPARA_EIv1.0_2666300"/>
</dbReference>
<dbReference type="EnsemblPlants" id="TraesPARA_EIv1.0_2669430.1">
    <property type="protein sequence ID" value="TraesPARA_EIv1.0_2669430.1.CDS1"/>
    <property type="gene ID" value="TraesPARA_EIv1.0_2669430"/>
</dbReference>
<dbReference type="EnsemblPlants" id="TraesPARA_EIv1.0_2674220.1">
    <property type="protein sequence ID" value="TraesPARA_EIv1.0_2674220.1.CDS1"/>
    <property type="gene ID" value="TraesPARA_EIv1.0_2674220"/>
</dbReference>
<dbReference type="EnsemblPlants" id="TraesPARA_EIv1.0_2680390.1">
    <property type="protein sequence ID" value="TraesPARA_EIv1.0_2680390.1.CDS1"/>
    <property type="gene ID" value="TraesPARA_EIv1.0_2680390"/>
</dbReference>
<dbReference type="EnsemblPlants" id="TraesPARA_EIv1.0_2681940.1">
    <property type="protein sequence ID" value="TraesPARA_EIv1.0_2681940.1.CDS1"/>
    <property type="gene ID" value="TraesPARA_EIv1.0_2681940"/>
</dbReference>
<dbReference type="EnsemblPlants" id="TraesRN6B0100594800.1">
    <property type="protein sequence ID" value="TraesRN6B0100594800.1"/>
    <property type="gene ID" value="TraesRN6B0100594800"/>
</dbReference>
<dbReference type="EnsemblPlants" id="TraesRN6D0100427000.1">
    <property type="protein sequence ID" value="TraesRN6D0100427000.1"/>
    <property type="gene ID" value="TraesRN6D0100427000"/>
</dbReference>
<dbReference type="EnsemblPlants" id="TraesSTA1D03G00454400.1">
    <property type="protein sequence ID" value="TraesSTA1D03G00454400.1.CDS1"/>
    <property type="gene ID" value="TraesSTA1D03G00454400"/>
</dbReference>
<dbReference type="GeneID" id="803125"/>
<dbReference type="Gramene" id="TraesARI6A03G03236360.1">
    <property type="protein sequence ID" value="TraesARI6A03G03236360.1.CDS1"/>
    <property type="gene ID" value="TraesARI6A03G03236360"/>
</dbReference>
<dbReference type="Gramene" id="TraesARI7B03G04256800.1">
    <property type="protein sequence ID" value="TraesARI7B03G04256800.1.CDS1"/>
    <property type="gene ID" value="TraesARI7B03G04256800"/>
</dbReference>
<dbReference type="Gramene" id="TraesJUL1D03G00458330.1">
    <property type="protein sequence ID" value="TraesJUL1D03G00458330.1.CDS1"/>
    <property type="gene ID" value="TraesJUL1D03G00458330"/>
</dbReference>
<dbReference type="Gramene" id="TraesJUL2D03G01180950.1">
    <property type="protein sequence ID" value="TraesJUL2D03G01180950.1.CDS1"/>
    <property type="gene ID" value="TraesJUL2D03G01180950"/>
</dbReference>
<dbReference type="Gramene" id="TraesKAR1D01G0107120.1">
    <property type="protein sequence ID" value="cds.TraesKAR1D01G0107120.1"/>
    <property type="gene ID" value="TraesKAR1D01G0107120"/>
</dbReference>
<dbReference type="Gramene" id="TraesKARUn01G0026870.1">
    <property type="protein sequence ID" value="cds.TraesKARUn01G0026870.1"/>
    <property type="gene ID" value="TraesKARUn01G0026870"/>
</dbReference>
<dbReference type="Gramene" id="TraesKARUn01G0027290.1">
    <property type="protein sequence ID" value="cds.TraesKARUn01G0027290.1"/>
    <property type="gene ID" value="TraesKARUn01G0027290"/>
</dbReference>
<dbReference type="Gramene" id="TraesKARUn01G0028350.1">
    <property type="protein sequence ID" value="cds.TraesKARUn01G0028350.1"/>
    <property type="gene ID" value="TraesKARUn01G0028350"/>
</dbReference>
<dbReference type="Gramene" id="TraesKARUn01G0029740.1">
    <property type="protein sequence ID" value="cds.TraesKARUn01G0029740.1"/>
    <property type="gene ID" value="TraesKARUn01G0029740"/>
</dbReference>
<dbReference type="Gramene" id="TraesKARUn01G0031050.1">
    <property type="protein sequence ID" value="cds.TraesKARUn01G0031050.1"/>
    <property type="gene ID" value="TraesKARUn01G0031050"/>
</dbReference>
<dbReference type="Gramene" id="TraesKARUn01G0032590.1">
    <property type="protein sequence ID" value="cds.TraesKARUn01G0032590.1"/>
    <property type="gene ID" value="TraesKARUn01G0032590"/>
</dbReference>
<dbReference type="Gramene" id="TraesKARUn01G0032900.1">
    <property type="protein sequence ID" value="cds.TraesKARUn01G0032900.1"/>
    <property type="gene ID" value="TraesKARUn01G0032900"/>
</dbReference>
<dbReference type="Gramene" id="TraesKARUn01G0032960.1">
    <property type="protein sequence ID" value="cds.TraesKARUn01G0032960.1"/>
    <property type="gene ID" value="TraesKARUn01G0032960"/>
</dbReference>
<dbReference type="Gramene" id="TraesKARUn01G0034760.1">
    <property type="protein sequence ID" value="cds.TraesKARUn01G0034760.1"/>
    <property type="gene ID" value="TraesKARUn01G0034760"/>
</dbReference>
<dbReference type="Gramene" id="TraesKARUn01G0037110.1">
    <property type="protein sequence ID" value="cds.TraesKARUn01G0037110.1"/>
    <property type="gene ID" value="TraesKARUn01G0037110"/>
</dbReference>
<dbReference type="Gramene" id="TraesKARUn01G0037470.1">
    <property type="protein sequence ID" value="cds.TraesKARUn01G0037470.1"/>
    <property type="gene ID" value="TraesKARUn01G0037470"/>
</dbReference>
<dbReference type="Gramene" id="TraesKARUn01G0060540.1">
    <property type="protein sequence ID" value="cds.TraesKARUn01G0060540.1"/>
    <property type="gene ID" value="TraesKARUn01G0060540"/>
</dbReference>
<dbReference type="Gramene" id="TraesKARUn01G0060960.1">
    <property type="protein sequence ID" value="cds.TraesKARUn01G0060960.1"/>
    <property type="gene ID" value="TraesKARUn01G0060960"/>
</dbReference>
<dbReference type="Gramene" id="TraesKARUn01G0061340.1">
    <property type="protein sequence ID" value="cds.TraesKARUn01G0061340.1"/>
    <property type="gene ID" value="TraesKARUn01G0061340"/>
</dbReference>
<dbReference type="Gramene" id="TraesKARUn01G0061400.1">
    <property type="protein sequence ID" value="cds.TraesKARUn01G0061400.1"/>
    <property type="gene ID" value="TraesKARUn01G0061400"/>
</dbReference>
<dbReference type="Gramene" id="TraesKARUn01G0066120.1">
    <property type="protein sequence ID" value="cds.TraesKARUn01G0066120.1"/>
    <property type="gene ID" value="TraesKARUn01G0066120"/>
</dbReference>
<dbReference type="Gramene" id="TraesKARUn01G0066480.1">
    <property type="protein sequence ID" value="cds.TraesKARUn01G0066480.1"/>
    <property type="gene ID" value="TraesKARUn01G0066480"/>
</dbReference>
<dbReference type="Gramene" id="TraesKARUn01G0067170.1">
    <property type="protein sequence ID" value="cds.TraesKARUn01G0067170.1"/>
    <property type="gene ID" value="TraesKARUn01G0067170"/>
</dbReference>
<dbReference type="Gramene" id="TraesKARUn01G0068670.1">
    <property type="protein sequence ID" value="cds.TraesKARUn01G0068670.1"/>
    <property type="gene ID" value="TraesKARUn01G0068670"/>
</dbReference>
<dbReference type="Gramene" id="TraesKARUn01G0070030.1">
    <property type="protein sequence ID" value="cds.TraesKARUn01G0070030.1"/>
    <property type="gene ID" value="TraesKARUn01G0070030"/>
</dbReference>
<dbReference type="Gramene" id="TraesKARUn01G0073710.1">
    <property type="protein sequence ID" value="cds.TraesKARUn01G0073710.1"/>
    <property type="gene ID" value="TraesKARUn01G0073710"/>
</dbReference>
<dbReference type="Gramene" id="TraesKARUn01G0077580.1">
    <property type="protein sequence ID" value="cds.TraesKARUn01G0077580.1"/>
    <property type="gene ID" value="TraesKARUn01G0077580"/>
</dbReference>
<dbReference type="Gramene" id="TraesKARUn01G0079190.1">
    <property type="protein sequence ID" value="cds.TraesKARUn01G0079190.1"/>
    <property type="gene ID" value="TraesKARUn01G0079190"/>
</dbReference>
<dbReference type="Gramene" id="TraesKARUn01G0083290.1">
    <property type="protein sequence ID" value="cds.TraesKARUn01G0083290.1"/>
    <property type="gene ID" value="TraesKARUn01G0083290"/>
</dbReference>
<dbReference type="Gramene" id="TraesKARUn01G0085500.1">
    <property type="protein sequence ID" value="cds.TraesKARUn01G0085500.1"/>
    <property type="gene ID" value="TraesKARUn01G0085500"/>
</dbReference>
<dbReference type="Gramene" id="TraesKARUn01G0085560.1">
    <property type="protein sequence ID" value="cds.TraesKARUn01G0085560.1"/>
    <property type="gene ID" value="TraesKARUn01G0085560"/>
</dbReference>
<dbReference type="Gramene" id="TraesKARUn01G0087960.1">
    <property type="protein sequence ID" value="cds.TraesKARUn01G0087960.1"/>
    <property type="gene ID" value="TraesKARUn01G0087960"/>
</dbReference>
<dbReference type="Gramene" id="TraesKARUn01G0088310.1">
    <property type="protein sequence ID" value="cds.TraesKARUn01G0088310.1"/>
    <property type="gene ID" value="TraesKARUn01G0088310"/>
</dbReference>
<dbReference type="Gramene" id="TraesKARUn01G0089560.1">
    <property type="protein sequence ID" value="cds.TraesKARUn01G0089560.1"/>
    <property type="gene ID" value="TraesKARUn01G0089560"/>
</dbReference>
<dbReference type="Gramene" id="TraesKARUn01G0090040.1">
    <property type="protein sequence ID" value="cds.TraesKARUn01G0090040.1"/>
    <property type="gene ID" value="TraesKARUn01G0090040"/>
</dbReference>
<dbReference type="Gramene" id="TraesKARUn01G0090260.1">
    <property type="protein sequence ID" value="cds.TraesKARUn01G0090260.1"/>
    <property type="gene ID" value="TraesKARUn01G0090260"/>
</dbReference>
<dbReference type="Gramene" id="TraesKARUn01G0091880.1">
    <property type="protein sequence ID" value="cds.TraesKARUn01G0091880.1"/>
    <property type="gene ID" value="TraesKARUn01G0091880"/>
</dbReference>
<dbReference type="Gramene" id="TraesKARUn01G0092210.1">
    <property type="protein sequence ID" value="cds.TraesKARUn01G0092210.1"/>
    <property type="gene ID" value="TraesKARUn01G0092210"/>
</dbReference>
<dbReference type="Gramene" id="TraesKARUn01G0094140.1">
    <property type="protein sequence ID" value="cds.TraesKARUn01G0094140.1"/>
    <property type="gene ID" value="TraesKARUn01G0094140"/>
</dbReference>
<dbReference type="Gramene" id="TraesKARUn01G0097060.1">
    <property type="protein sequence ID" value="cds.TraesKARUn01G0097060.1"/>
    <property type="gene ID" value="TraesKARUn01G0097060"/>
</dbReference>
<dbReference type="Gramene" id="TraesKARUn01G0097450.1">
    <property type="protein sequence ID" value="cds.TraesKARUn01G0097450.1"/>
    <property type="gene ID" value="TraesKARUn01G0097450"/>
</dbReference>
<dbReference type="Gramene" id="TraesKARUn01G0099730.1">
    <property type="protein sequence ID" value="cds.TraesKARUn01G0099730.1"/>
    <property type="gene ID" value="TraesKARUn01G0099730"/>
</dbReference>
<dbReference type="Gramene" id="TraesKARUn01G0101850.1">
    <property type="protein sequence ID" value="cds.TraesKARUn01G0101850.1"/>
    <property type="gene ID" value="TraesKARUn01G0101850"/>
</dbReference>
<dbReference type="Gramene" id="TraesKARUn01G0105060.1">
    <property type="protein sequence ID" value="cds.TraesKARUn01G0105060.1"/>
    <property type="gene ID" value="TraesKARUn01G0105060"/>
</dbReference>
<dbReference type="Gramene" id="TraesKARUn01G0108130.1">
    <property type="protein sequence ID" value="cds.TraesKARUn01G0108130.1"/>
    <property type="gene ID" value="TraesKARUn01G0108130"/>
</dbReference>
<dbReference type="Gramene" id="TraesKARUn01G0108400.1">
    <property type="protein sequence ID" value="cds.TraesKARUn01G0108400.1"/>
    <property type="gene ID" value="TraesKARUn01G0108400"/>
</dbReference>
<dbReference type="Gramene" id="TraesKARUn01G0108700.1">
    <property type="protein sequence ID" value="cds.TraesKARUn01G0108700.1"/>
    <property type="gene ID" value="TraesKARUn01G0108700"/>
</dbReference>
<dbReference type="Gramene" id="TraesKARUn01G0111170.1">
    <property type="protein sequence ID" value="cds.TraesKARUn01G0111170.1"/>
    <property type="gene ID" value="TraesKARUn01G0111170"/>
</dbReference>
<dbReference type="Gramene" id="TraesKARUn01G0111790.1">
    <property type="protein sequence ID" value="cds.TraesKARUn01G0111790.1"/>
    <property type="gene ID" value="TraesKARUn01G0111790"/>
</dbReference>
<dbReference type="Gramene" id="TraesKARUn01G0112430.1">
    <property type="protein sequence ID" value="cds.TraesKARUn01G0112430.1"/>
    <property type="gene ID" value="TraesKARUn01G0112430"/>
</dbReference>
<dbReference type="Gramene" id="TraesKARUn01G0113020.1">
    <property type="protein sequence ID" value="cds.TraesKARUn01G0113020.1"/>
    <property type="gene ID" value="TraesKARUn01G0113020"/>
</dbReference>
<dbReference type="Gramene" id="TraesKARUn01G0113050.1">
    <property type="protein sequence ID" value="cds.TraesKARUn01G0113050.1"/>
    <property type="gene ID" value="TraesKARUn01G0113050"/>
</dbReference>
<dbReference type="Gramene" id="TraesKARUn01G0114300.1">
    <property type="protein sequence ID" value="cds.TraesKARUn01G0114300.1"/>
    <property type="gene ID" value="TraesKARUn01G0114300"/>
</dbReference>
<dbReference type="Gramene" id="TraesKARUn01G0114900.1">
    <property type="protein sequence ID" value="cds.TraesKARUn01G0114900.1"/>
    <property type="gene ID" value="TraesKARUn01G0114900"/>
</dbReference>
<dbReference type="Gramene" id="TraesKARUn01G0116460.1">
    <property type="protein sequence ID" value="cds.TraesKARUn01G0116460.1"/>
    <property type="gene ID" value="TraesKARUn01G0116460"/>
</dbReference>
<dbReference type="Gramene" id="TraesKARUn01G0118690.1">
    <property type="protein sequence ID" value="cds.TraesKARUn01G0118690.1"/>
    <property type="gene ID" value="TraesKARUn01G0118690"/>
</dbReference>
<dbReference type="Gramene" id="TraesKARUn01G0123970.1">
    <property type="protein sequence ID" value="cds.TraesKARUn01G0123970.1"/>
    <property type="gene ID" value="TraesKARUn01G0123970"/>
</dbReference>
<dbReference type="Gramene" id="TraesKARUn01G0124300.1">
    <property type="protein sequence ID" value="cds.TraesKARUn01G0124300.1"/>
    <property type="gene ID" value="TraesKARUn01G0124300"/>
</dbReference>
<dbReference type="Gramene" id="TraesKARUn01G0125580.1">
    <property type="protein sequence ID" value="cds.TraesKARUn01G0125580.1"/>
    <property type="gene ID" value="TraesKARUn01G0125580"/>
</dbReference>
<dbReference type="Gramene" id="TraesKARUn01G0129220.1">
    <property type="protein sequence ID" value="cds.TraesKARUn01G0129220.1"/>
    <property type="gene ID" value="TraesKARUn01G0129220"/>
</dbReference>
<dbReference type="Gramene" id="TraesKARUn01G0130400.1">
    <property type="protein sequence ID" value="cds.TraesKARUn01G0130400.1"/>
    <property type="gene ID" value="TraesKARUn01G0130400"/>
</dbReference>
<dbReference type="Gramene" id="TraesKARUn01G0132450.1">
    <property type="protein sequence ID" value="cds.TraesKARUn01G0132450.1"/>
    <property type="gene ID" value="TraesKARUn01G0132450"/>
</dbReference>
<dbReference type="Gramene" id="TraesKARUn01G0132720.1">
    <property type="protein sequence ID" value="cds.TraesKARUn01G0132720.1"/>
    <property type="gene ID" value="TraesKARUn01G0132720"/>
</dbReference>
<dbReference type="Gramene" id="TraesKARUn01G0132890.1">
    <property type="protein sequence ID" value="cds.TraesKARUn01G0132890.1"/>
    <property type="gene ID" value="TraesKARUn01G0132890"/>
</dbReference>
<dbReference type="Gramene" id="TraesKARUn01G0137660.1">
    <property type="protein sequence ID" value="cds.TraesKARUn01G0137660.1"/>
    <property type="gene ID" value="TraesKARUn01G0137660"/>
</dbReference>
<dbReference type="Gramene" id="TraesKARUn01G0137950.1">
    <property type="protein sequence ID" value="cds.TraesKARUn01G0137950.1"/>
    <property type="gene ID" value="TraesKARUn01G0137950"/>
</dbReference>
<dbReference type="Gramene" id="TraesKARUn01G0141080.1">
    <property type="protein sequence ID" value="cds.TraesKARUn01G0141080.1"/>
    <property type="gene ID" value="TraesKARUn01G0141080"/>
</dbReference>
<dbReference type="Gramene" id="TraesKARUn01G0142360.1">
    <property type="protein sequence ID" value="cds.TraesKARUn01G0142360.1"/>
    <property type="gene ID" value="TraesKARUn01G0142360"/>
</dbReference>
<dbReference type="Gramene" id="TraesKARUn01G0143700.1">
    <property type="protein sequence ID" value="cds.TraesKARUn01G0143700.1"/>
    <property type="gene ID" value="TraesKARUn01G0143700"/>
</dbReference>
<dbReference type="Gramene" id="TraesKARUn01G0145620.1">
    <property type="protein sequence ID" value="cds.TraesKARUn01G0145620.1"/>
    <property type="gene ID" value="TraesKARUn01G0145620"/>
</dbReference>
<dbReference type="Gramene" id="TraesKARUn01G0146520.1">
    <property type="protein sequence ID" value="cds.TraesKARUn01G0146520.1"/>
    <property type="gene ID" value="TraesKARUn01G0146520"/>
</dbReference>
<dbReference type="Gramene" id="TraesKARUn01G0147680.1">
    <property type="protein sequence ID" value="cds.TraesKARUn01G0147680.1"/>
    <property type="gene ID" value="TraesKARUn01G0147680"/>
</dbReference>
<dbReference type="Gramene" id="TraesKARUn01G0147800.1">
    <property type="protein sequence ID" value="cds.TraesKARUn01G0147800.1"/>
    <property type="gene ID" value="TraesKARUn01G0147800"/>
</dbReference>
<dbReference type="Gramene" id="TraesKARUn01G0150050.1">
    <property type="protein sequence ID" value="cds.TraesKARUn01G0150050.1"/>
    <property type="gene ID" value="TraesKARUn01G0150050"/>
</dbReference>
<dbReference type="Gramene" id="TraesKARUn01G0152130.1">
    <property type="protein sequence ID" value="cds.TraesKARUn01G0152130.1"/>
    <property type="gene ID" value="TraesKARUn01G0152130"/>
</dbReference>
<dbReference type="Gramene" id="TraesKARUn01G0152620.1">
    <property type="protein sequence ID" value="cds.TraesKARUn01G0152620.1"/>
    <property type="gene ID" value="TraesKARUn01G0152620"/>
</dbReference>
<dbReference type="Gramene" id="TraesKARUn01G0154520.1">
    <property type="protein sequence ID" value="cds.TraesKARUn01G0154520.1"/>
    <property type="gene ID" value="TraesKARUn01G0154520"/>
</dbReference>
<dbReference type="Gramene" id="TraesKARUn01G0156460.1">
    <property type="protein sequence ID" value="cds.TraesKARUn01G0156460.1"/>
    <property type="gene ID" value="TraesKARUn01G0156460"/>
</dbReference>
<dbReference type="Gramene" id="TraesKARUn01G0157720.1">
    <property type="protein sequence ID" value="cds.TraesKARUn01G0157720.1"/>
    <property type="gene ID" value="TraesKARUn01G0157720"/>
</dbReference>
<dbReference type="Gramene" id="TraesKARUn01G0159350.1">
    <property type="protein sequence ID" value="cds.TraesKARUn01G0159350.1"/>
    <property type="gene ID" value="TraesKARUn01G0159350"/>
</dbReference>
<dbReference type="Gramene" id="TraesKARUn01G0159710.1">
    <property type="protein sequence ID" value="cds.TraesKARUn01G0159710.1"/>
    <property type="gene ID" value="TraesKARUn01G0159710"/>
</dbReference>
<dbReference type="Gramene" id="TraesKARUn01G0159820.1">
    <property type="protein sequence ID" value="cds.TraesKARUn01G0159820.1"/>
    <property type="gene ID" value="TraesKARUn01G0159820"/>
</dbReference>
<dbReference type="Gramene" id="TraesKARUn01G0161550.1">
    <property type="protein sequence ID" value="cds.TraesKARUn01G0161550.1"/>
    <property type="gene ID" value="TraesKARUn01G0161550"/>
</dbReference>
<dbReference type="Gramene" id="TraesKARUn01G0163410.1">
    <property type="protein sequence ID" value="cds.TraesKARUn01G0163410.1"/>
    <property type="gene ID" value="TraesKARUn01G0163410"/>
</dbReference>
<dbReference type="Gramene" id="TraesKARUn01G0164700.1">
    <property type="protein sequence ID" value="cds.TraesKARUn01G0164700.1"/>
    <property type="gene ID" value="TraesKARUn01G0164700"/>
</dbReference>
<dbReference type="Gramene" id="TraesKARUn01G0166000.1">
    <property type="protein sequence ID" value="cds.TraesKARUn01G0166000.1"/>
    <property type="gene ID" value="TraesKARUn01G0166000"/>
</dbReference>
<dbReference type="Gramene" id="TraesKARUn01G0167420.1">
    <property type="protein sequence ID" value="cds.TraesKARUn01G0167420.1"/>
    <property type="gene ID" value="TraesKARUn01G0167420"/>
</dbReference>
<dbReference type="Gramene" id="TraesKARUn01G0167620.1">
    <property type="protein sequence ID" value="cds.TraesKARUn01G0167620.1"/>
    <property type="gene ID" value="TraesKARUn01G0167620"/>
</dbReference>
<dbReference type="Gramene" id="TraesKARUn01G0168010.1">
    <property type="protein sequence ID" value="cds.TraesKARUn01G0168010.1"/>
    <property type="gene ID" value="TraesKARUn01G0168010"/>
</dbReference>
<dbReference type="Gramene" id="TraesKARUn01G0170820.1">
    <property type="protein sequence ID" value="cds.TraesKARUn01G0170820.1"/>
    <property type="gene ID" value="TraesKARUn01G0170820"/>
</dbReference>
<dbReference type="Gramene" id="TraesKARUn01G0171070.1">
    <property type="protein sequence ID" value="cds.TraesKARUn01G0171070.1"/>
    <property type="gene ID" value="TraesKARUn01G0171070"/>
</dbReference>
<dbReference type="Gramene" id="TraesKARUn01G0171440.1">
    <property type="protein sequence ID" value="cds.TraesKARUn01G0171440.1"/>
    <property type="gene ID" value="TraesKARUn01G0171440"/>
</dbReference>
<dbReference type="Gramene" id="TraesKARUn01G0171670.1">
    <property type="protein sequence ID" value="cds.TraesKARUn01G0171670.1"/>
    <property type="gene ID" value="TraesKARUn01G0171670"/>
</dbReference>
<dbReference type="Gramene" id="TraesKARUn01G0177040.1">
    <property type="protein sequence ID" value="cds.TraesKARUn01G0177040.1"/>
    <property type="gene ID" value="TraesKARUn01G0177040"/>
</dbReference>
<dbReference type="Gramene" id="TraesKARUn01G0177140.1">
    <property type="protein sequence ID" value="cds.TraesKARUn01G0177140.1"/>
    <property type="gene ID" value="TraesKARUn01G0177140"/>
</dbReference>
<dbReference type="Gramene" id="TraesKARUn01G0178360.1">
    <property type="protein sequence ID" value="cds.TraesKARUn01G0178360.1"/>
    <property type="gene ID" value="TraesKARUn01G0178360"/>
</dbReference>
<dbReference type="Gramene" id="TraesKARUn01G0178900.1">
    <property type="protein sequence ID" value="cds.TraesKARUn01G0178900.1"/>
    <property type="gene ID" value="TraesKARUn01G0178900"/>
</dbReference>
<dbReference type="Gramene" id="TraesKARUn01G0178970.1">
    <property type="protein sequence ID" value="cds.TraesKARUn01G0178970.1"/>
    <property type="gene ID" value="TraesKARUn01G0178970"/>
</dbReference>
<dbReference type="Gramene" id="TraesKARUn01G0179580.1">
    <property type="protein sequence ID" value="cds.TraesKARUn01G0179580.1"/>
    <property type="gene ID" value="TraesKARUn01G0179580"/>
</dbReference>
<dbReference type="Gramene" id="TraesKARUn01G0182500.1">
    <property type="protein sequence ID" value="cds.TraesKARUn01G0182500.1"/>
    <property type="gene ID" value="TraesKARUn01G0182500"/>
</dbReference>
<dbReference type="Gramene" id="TraesKARUn01G0182690.1">
    <property type="protein sequence ID" value="cds.TraesKARUn01G0182690.1"/>
    <property type="gene ID" value="TraesKARUn01G0182690"/>
</dbReference>
<dbReference type="Gramene" id="TraesKARUn01G0184190.1">
    <property type="protein sequence ID" value="cds.TraesKARUn01G0184190.1"/>
    <property type="gene ID" value="TraesKARUn01G0184190"/>
</dbReference>
<dbReference type="Gramene" id="TraesKARUn01G0184450.1">
    <property type="protein sequence ID" value="cds.TraesKARUn01G0184450.1"/>
    <property type="gene ID" value="TraesKARUn01G0184450"/>
</dbReference>
<dbReference type="Gramene" id="TraesKARUn01G0184610.1">
    <property type="protein sequence ID" value="cds.TraesKARUn01G0184610.1"/>
    <property type="gene ID" value="TraesKARUn01G0184610"/>
</dbReference>
<dbReference type="Gramene" id="TraesKARUn01G0184850.1">
    <property type="protein sequence ID" value="cds.TraesKARUn01G0184850.1"/>
    <property type="gene ID" value="TraesKARUn01G0184850"/>
</dbReference>
<dbReference type="Gramene" id="TraesKARUn01G0184920.1">
    <property type="protein sequence ID" value="cds.TraesKARUn01G0184920.1"/>
    <property type="gene ID" value="TraesKARUn01G0184920"/>
</dbReference>
<dbReference type="Gramene" id="TraesKARUn01G0185260.1">
    <property type="protein sequence ID" value="cds.TraesKARUn01G0185260.1"/>
    <property type="gene ID" value="TraesKARUn01G0185260"/>
</dbReference>
<dbReference type="Gramene" id="TraesKARUn01G0185370.1">
    <property type="protein sequence ID" value="cds.TraesKARUn01G0185370.1"/>
    <property type="gene ID" value="TraesKARUn01G0185370"/>
</dbReference>
<dbReference type="Gramene" id="TraesKARUn01G0187420.1">
    <property type="protein sequence ID" value="cds.TraesKARUn01G0187420.1"/>
    <property type="gene ID" value="TraesKARUn01G0187420"/>
</dbReference>
<dbReference type="Gramene" id="TraesKARUn01G0187640.1">
    <property type="protein sequence ID" value="cds.TraesKARUn01G0187640.1"/>
    <property type="gene ID" value="TraesKARUn01G0187640"/>
</dbReference>
<dbReference type="Gramene" id="TraesKARUn01G0187900.1">
    <property type="protein sequence ID" value="cds.TraesKARUn01G0187900.1"/>
    <property type="gene ID" value="TraesKARUn01G0187900"/>
</dbReference>
<dbReference type="Gramene" id="TraesKARUn01G0188590.1">
    <property type="protein sequence ID" value="cds.TraesKARUn01G0188590.1"/>
    <property type="gene ID" value="TraesKARUn01G0188590"/>
</dbReference>
<dbReference type="Gramene" id="TraesKARUn01G0189060.1">
    <property type="protein sequence ID" value="cds.TraesKARUn01G0189060.1"/>
    <property type="gene ID" value="TraesKARUn01G0189060"/>
</dbReference>
<dbReference type="Gramene" id="TraesKARUn01G0189420.1">
    <property type="protein sequence ID" value="cds.TraesKARUn01G0189420.1"/>
    <property type="gene ID" value="TraesKARUn01G0189420"/>
</dbReference>
<dbReference type="Gramene" id="TraesKARUn01G0189510.1">
    <property type="protein sequence ID" value="cds.TraesKARUn01G0189510.1"/>
    <property type="gene ID" value="TraesKARUn01G0189510"/>
</dbReference>
<dbReference type="Gramene" id="TraesKARUn01G0191820.1">
    <property type="protein sequence ID" value="cds.TraesKARUn01G0191820.1"/>
    <property type="gene ID" value="TraesKARUn01G0191820"/>
</dbReference>
<dbReference type="Gramene" id="TraesLAC1D03G00458790.1">
    <property type="protein sequence ID" value="TraesLAC1D03G00458790.1.CDS1"/>
    <property type="gene ID" value="TraesLAC1D03G00458790"/>
</dbReference>
<dbReference type="Gramene" id="TraesLDM1D03G00457260.1">
    <property type="protein sequence ID" value="TraesLDM1D03G00457260.1.CDS1"/>
    <property type="gene ID" value="TraesLDM1D03G00457260"/>
</dbReference>
<dbReference type="Gramene" id="TraesLDM7D03G04499880.1">
    <property type="protein sequence ID" value="TraesLDM7D03G04499880.1.CDS1"/>
    <property type="gene ID" value="TraesLDM7D03G04499880"/>
</dbReference>
<dbReference type="Gramene" id="TraesMAC1D03G00454840.1">
    <property type="protein sequence ID" value="TraesMAC1D03G00454840.1.CDS1"/>
    <property type="gene ID" value="TraesMAC1D03G00454840"/>
</dbReference>
<dbReference type="Gramene" id="TraesPARA_EIv1.0_2055410.1">
    <property type="protein sequence ID" value="TraesPARA_EIv1.0_2055410.1.CDS1"/>
    <property type="gene ID" value="TraesPARA_EIv1.0_2055410"/>
</dbReference>
<dbReference type="Gramene" id="TraesPARA_EIv1.0_2645090.1">
    <property type="protein sequence ID" value="TraesPARA_EIv1.0_2645090.1.CDS1"/>
    <property type="gene ID" value="TraesPARA_EIv1.0_2645090"/>
</dbReference>
<dbReference type="Gramene" id="TraesPARA_EIv1.0_2645810.1">
    <property type="protein sequence ID" value="TraesPARA_EIv1.0_2645810.1.CDS1"/>
    <property type="gene ID" value="TraesPARA_EIv1.0_2645810"/>
</dbReference>
<dbReference type="Gramene" id="TraesPARA_EIv1.0_2646760.1">
    <property type="protein sequence ID" value="TraesPARA_EIv1.0_2646760.1.CDS1"/>
    <property type="gene ID" value="TraesPARA_EIv1.0_2646760"/>
</dbReference>
<dbReference type="Gramene" id="TraesPARA_EIv1.0_2646820.1">
    <property type="protein sequence ID" value="TraesPARA_EIv1.0_2646820.1.CDS1"/>
    <property type="gene ID" value="TraesPARA_EIv1.0_2646820"/>
</dbReference>
<dbReference type="Gramene" id="TraesPARA_EIv1.0_2647290.1">
    <property type="protein sequence ID" value="TraesPARA_EIv1.0_2647290.1.CDS1"/>
    <property type="gene ID" value="TraesPARA_EIv1.0_2647290"/>
</dbReference>
<dbReference type="Gramene" id="TraesPARA_EIv1.0_2647560.1">
    <property type="protein sequence ID" value="TraesPARA_EIv1.0_2647560.1.CDS1"/>
    <property type="gene ID" value="TraesPARA_EIv1.0_2647560"/>
</dbReference>
<dbReference type="Gramene" id="TraesPARA_EIv1.0_2652790.1">
    <property type="protein sequence ID" value="TraesPARA_EIv1.0_2652790.1.CDS1"/>
    <property type="gene ID" value="TraesPARA_EIv1.0_2652790"/>
</dbReference>
<dbReference type="Gramene" id="TraesPARA_EIv1.0_2654460.1">
    <property type="protein sequence ID" value="TraesPARA_EIv1.0_2654460.1.CDS1"/>
    <property type="gene ID" value="TraesPARA_EIv1.0_2654460"/>
</dbReference>
<dbReference type="Gramene" id="TraesPARA_EIv1.0_2656950.1">
    <property type="protein sequence ID" value="TraesPARA_EIv1.0_2656950.1.CDS1"/>
    <property type="gene ID" value="TraesPARA_EIv1.0_2656950"/>
</dbReference>
<dbReference type="Gramene" id="TraesPARA_EIv1.0_2660160.1">
    <property type="protein sequence ID" value="TraesPARA_EIv1.0_2660160.1.CDS1"/>
    <property type="gene ID" value="TraesPARA_EIv1.0_2660160"/>
</dbReference>
<dbReference type="Gramene" id="TraesPARA_EIv1.0_2660430.1">
    <property type="protein sequence ID" value="TraesPARA_EIv1.0_2660430.1.CDS1"/>
    <property type="gene ID" value="TraesPARA_EIv1.0_2660430"/>
</dbReference>
<dbReference type="Gramene" id="TraesPARA_EIv1.0_2665400.1">
    <property type="protein sequence ID" value="TraesPARA_EIv1.0_2665400.1.CDS1"/>
    <property type="gene ID" value="TraesPARA_EIv1.0_2665400"/>
</dbReference>
<dbReference type="Gramene" id="TraesPARA_EIv1.0_2666170.1">
    <property type="protein sequence ID" value="TraesPARA_EIv1.0_2666170.1.CDS1"/>
    <property type="gene ID" value="TraesPARA_EIv1.0_2666170"/>
</dbReference>
<dbReference type="Gramene" id="TraesPARA_EIv1.0_2666300.1">
    <property type="protein sequence ID" value="TraesPARA_EIv1.0_2666300.1.CDS1"/>
    <property type="gene ID" value="TraesPARA_EIv1.0_2666300"/>
</dbReference>
<dbReference type="Gramene" id="TraesPARA_EIv1.0_2669430.1">
    <property type="protein sequence ID" value="TraesPARA_EIv1.0_2669430.1.CDS1"/>
    <property type="gene ID" value="TraesPARA_EIv1.0_2669430"/>
</dbReference>
<dbReference type="Gramene" id="TraesPARA_EIv1.0_2674220.1">
    <property type="protein sequence ID" value="TraesPARA_EIv1.0_2674220.1.CDS1"/>
    <property type="gene ID" value="TraesPARA_EIv1.0_2674220"/>
</dbReference>
<dbReference type="Gramene" id="TraesPARA_EIv1.0_2680390.1">
    <property type="protein sequence ID" value="TraesPARA_EIv1.0_2680390.1.CDS1"/>
    <property type="gene ID" value="TraesPARA_EIv1.0_2680390"/>
</dbReference>
<dbReference type="Gramene" id="TraesPARA_EIv1.0_2681940.1">
    <property type="protein sequence ID" value="TraesPARA_EIv1.0_2681940.1.CDS1"/>
    <property type="gene ID" value="TraesPARA_EIv1.0_2681940"/>
</dbReference>
<dbReference type="Gramene" id="TraesRN6B0100594800.1">
    <property type="protein sequence ID" value="TraesRN6B0100594800.1"/>
    <property type="gene ID" value="TraesRN6B0100594800"/>
</dbReference>
<dbReference type="Gramene" id="TraesRN6D0100427000.1">
    <property type="protein sequence ID" value="TraesRN6D0100427000.1"/>
    <property type="gene ID" value="TraesRN6D0100427000"/>
</dbReference>
<dbReference type="Gramene" id="TraesSTA1D03G00454400.1">
    <property type="protein sequence ID" value="TraesSTA1D03G00454400.1.CDS1"/>
    <property type="gene ID" value="TraesSTA1D03G00454400"/>
</dbReference>
<dbReference type="KEGG" id="taes:803125"/>
<dbReference type="eggNOG" id="ENOG502SHG6">
    <property type="taxonomic scope" value="Eukaryota"/>
</dbReference>
<dbReference type="HOGENOM" id="CLU_058591_0_2_1"/>
<dbReference type="Proteomes" id="UP000019116">
    <property type="component" value="Chloroplast"/>
</dbReference>
<dbReference type="GO" id="GO:0009507">
    <property type="term" value="C:chloroplast"/>
    <property type="evidence" value="ECO:0007669"/>
    <property type="project" value="UniProtKB-SubCell"/>
</dbReference>
<dbReference type="GO" id="GO:1990904">
    <property type="term" value="C:ribonucleoprotein complex"/>
    <property type="evidence" value="ECO:0007669"/>
    <property type="project" value="UniProtKB-KW"/>
</dbReference>
<dbReference type="GO" id="GO:0005840">
    <property type="term" value="C:ribosome"/>
    <property type="evidence" value="ECO:0007669"/>
    <property type="project" value="UniProtKB-KW"/>
</dbReference>
<dbReference type="GO" id="GO:0019843">
    <property type="term" value="F:rRNA binding"/>
    <property type="evidence" value="ECO:0007669"/>
    <property type="project" value="UniProtKB-KW"/>
</dbReference>
<dbReference type="GO" id="GO:0003735">
    <property type="term" value="F:structural constituent of ribosome"/>
    <property type="evidence" value="ECO:0007669"/>
    <property type="project" value="InterPro"/>
</dbReference>
<dbReference type="GO" id="GO:0006412">
    <property type="term" value="P:translation"/>
    <property type="evidence" value="ECO:0007669"/>
    <property type="project" value="UniProtKB-UniRule"/>
</dbReference>
<dbReference type="CDD" id="cd02412">
    <property type="entry name" value="KH-II_30S_S3"/>
    <property type="match status" value="1"/>
</dbReference>
<dbReference type="FunFam" id="3.30.1140.32:FF:000003">
    <property type="entry name" value="30S ribosomal protein S3, chloroplastic"/>
    <property type="match status" value="1"/>
</dbReference>
<dbReference type="FunFam" id="3.30.300.20:FF:000008">
    <property type="entry name" value="30S ribosomal protein S3, chloroplastic"/>
    <property type="match status" value="1"/>
</dbReference>
<dbReference type="Gene3D" id="3.30.300.20">
    <property type="match status" value="1"/>
</dbReference>
<dbReference type="Gene3D" id="3.30.1140.32">
    <property type="entry name" value="Ribosomal protein S3, C-terminal domain"/>
    <property type="match status" value="1"/>
</dbReference>
<dbReference type="HAMAP" id="MF_01309_B">
    <property type="entry name" value="Ribosomal_uS3_B"/>
    <property type="match status" value="1"/>
</dbReference>
<dbReference type="InterPro" id="IPR015946">
    <property type="entry name" value="KH_dom-like_a/b"/>
</dbReference>
<dbReference type="InterPro" id="IPR009019">
    <property type="entry name" value="KH_sf_prok-type"/>
</dbReference>
<dbReference type="InterPro" id="IPR036419">
    <property type="entry name" value="Ribosomal_S3_C_sf"/>
</dbReference>
<dbReference type="InterPro" id="IPR005704">
    <property type="entry name" value="Ribosomal_uS3_bac-typ"/>
</dbReference>
<dbReference type="InterPro" id="IPR001351">
    <property type="entry name" value="Ribosomal_uS3_C"/>
</dbReference>
<dbReference type="InterPro" id="IPR018280">
    <property type="entry name" value="Ribosomal_uS3_CS"/>
</dbReference>
<dbReference type="NCBIfam" id="TIGR01009">
    <property type="entry name" value="rpsC_bact"/>
    <property type="match status" value="1"/>
</dbReference>
<dbReference type="PANTHER" id="PTHR11760">
    <property type="entry name" value="30S/40S RIBOSOMAL PROTEIN S3"/>
    <property type="match status" value="1"/>
</dbReference>
<dbReference type="PANTHER" id="PTHR11760:SF42">
    <property type="entry name" value="SMALL RIBOSOMAL SUBUNIT PROTEIN US3C"/>
    <property type="match status" value="1"/>
</dbReference>
<dbReference type="Pfam" id="PF00189">
    <property type="entry name" value="Ribosomal_S3_C"/>
    <property type="match status" value="1"/>
</dbReference>
<dbReference type="SUPFAM" id="SSF54814">
    <property type="entry name" value="Prokaryotic type KH domain (KH-domain type II)"/>
    <property type="match status" value="1"/>
</dbReference>
<dbReference type="SUPFAM" id="SSF54821">
    <property type="entry name" value="Ribosomal protein S3 C-terminal domain"/>
    <property type="match status" value="1"/>
</dbReference>
<dbReference type="PROSITE" id="PS00548">
    <property type="entry name" value="RIBOSOMAL_S3"/>
    <property type="match status" value="1"/>
</dbReference>
<sequence length="239" mass="27563">MGQKINPLGFRLGTTQKHHSFWFAQPKNYSEGLQEDKKIRDCIKNYIQKNRKKGSNRKIESDSSSEVITHNRKMDSGSSSEVITHIEIQKEIDTIHVIIHIGFPNLLKKKGAIEELEKDLQKEINSVNQRFNISIEKVKEPYRQPNILAEYIAFQLKNRVSFRKAMKKAIELTKKADIRGVKVKIAGRLGGKEIARAESIKKGRLPLQTIRAKIDYCCYPIRTIYGVLGVKIWIFVDEE</sequence>
<organism>
    <name type="scientific">Triticum aestivum</name>
    <name type="common">Wheat</name>
    <dbReference type="NCBI Taxonomy" id="4565"/>
    <lineage>
        <taxon>Eukaryota</taxon>
        <taxon>Viridiplantae</taxon>
        <taxon>Streptophyta</taxon>
        <taxon>Embryophyta</taxon>
        <taxon>Tracheophyta</taxon>
        <taxon>Spermatophyta</taxon>
        <taxon>Magnoliopsida</taxon>
        <taxon>Liliopsida</taxon>
        <taxon>Poales</taxon>
        <taxon>Poaceae</taxon>
        <taxon>BOP clade</taxon>
        <taxon>Pooideae</taxon>
        <taxon>Triticodae</taxon>
        <taxon>Triticeae</taxon>
        <taxon>Triticinae</taxon>
        <taxon>Triticum</taxon>
    </lineage>
</organism>
<gene>
    <name type="primary">rps3</name>
</gene>
<comment type="subunit">
    <text evidence="1">Part of the 30S ribosomal subunit.</text>
</comment>
<comment type="subcellular location">
    <subcellularLocation>
        <location>Plastid</location>
        <location>Chloroplast</location>
    </subcellularLocation>
</comment>
<comment type="similarity">
    <text evidence="3">Belongs to the universal ribosomal protein uS3 family.</text>
</comment>
<reference key="1">
    <citation type="journal article" date="2000" name="Plant Mol. Biol. Rep.">
        <title>Chinese spring wheat (Triticum aestivum L.) chloroplast genome: complete sequence and contig clones.</title>
        <authorList>
            <person name="Ogihara Y."/>
            <person name="Isono K."/>
            <person name="Kojima T."/>
            <person name="Endo A."/>
            <person name="Hanaoka M."/>
            <person name="Shiina T."/>
            <person name="Terachi T."/>
            <person name="Utsugi S."/>
            <person name="Murata M."/>
            <person name="Mori N."/>
            <person name="Takumi S."/>
            <person name="Ikeo K."/>
            <person name="Gojobori T."/>
            <person name="Murai R."/>
            <person name="Murai K."/>
            <person name="Matsuoka Y."/>
            <person name="Ohnishi Y."/>
            <person name="Tajiri H."/>
            <person name="Tsunewaki K."/>
        </authorList>
    </citation>
    <scope>NUCLEOTIDE SEQUENCE [LARGE SCALE GENOMIC DNA]</scope>
    <source>
        <strain>cv. Chinese Spring</strain>
    </source>
</reference>
<evidence type="ECO:0000250" key="1"/>
<evidence type="ECO:0000256" key="2">
    <source>
        <dbReference type="SAM" id="MobiDB-lite"/>
    </source>
</evidence>
<evidence type="ECO:0000305" key="3"/>
<geneLocation type="chloroplast"/>
<protein>
    <recommendedName>
        <fullName evidence="3">Small ribosomal subunit protein uS3c</fullName>
    </recommendedName>
    <alternativeName>
        <fullName>30S ribosomal protein S3, chloroplastic</fullName>
    </alternativeName>
</protein>
<accession>Q95H49</accession>
<keyword id="KW-0150">Chloroplast</keyword>
<keyword id="KW-0934">Plastid</keyword>
<keyword id="KW-1185">Reference proteome</keyword>
<keyword id="KW-0687">Ribonucleoprotein</keyword>
<keyword id="KW-0689">Ribosomal protein</keyword>
<keyword id="KW-0694">RNA-binding</keyword>
<keyword id="KW-0699">rRNA-binding</keyword>
<name>RR3_WHEAT</name>